<evidence type="ECO:0000255" key="1">
    <source>
        <dbReference type="HAMAP-Rule" id="MF_01595"/>
    </source>
</evidence>
<evidence type="ECO:0000305" key="2"/>
<dbReference type="EC" id="2.7.7.8" evidence="1"/>
<dbReference type="EMBL" id="CP000910">
    <property type="protein sequence ID" value="ABY22419.1"/>
    <property type="status" value="ALT_INIT"/>
    <property type="molecule type" value="Genomic_DNA"/>
</dbReference>
<dbReference type="RefSeq" id="WP_041684349.1">
    <property type="nucleotide sequence ID" value="NC_010168.1"/>
</dbReference>
<dbReference type="SMR" id="A9WPX4"/>
<dbReference type="STRING" id="288705.RSal33209_0672"/>
<dbReference type="KEGG" id="rsa:RSal33209_0672"/>
<dbReference type="eggNOG" id="COG1185">
    <property type="taxonomic scope" value="Bacteria"/>
</dbReference>
<dbReference type="HOGENOM" id="CLU_004217_1_0_11"/>
<dbReference type="Proteomes" id="UP000002007">
    <property type="component" value="Chromosome"/>
</dbReference>
<dbReference type="GO" id="GO:0005829">
    <property type="term" value="C:cytosol"/>
    <property type="evidence" value="ECO:0007669"/>
    <property type="project" value="TreeGrafter"/>
</dbReference>
<dbReference type="GO" id="GO:0000175">
    <property type="term" value="F:3'-5'-RNA exonuclease activity"/>
    <property type="evidence" value="ECO:0007669"/>
    <property type="project" value="TreeGrafter"/>
</dbReference>
<dbReference type="GO" id="GO:0000287">
    <property type="term" value="F:magnesium ion binding"/>
    <property type="evidence" value="ECO:0007669"/>
    <property type="project" value="UniProtKB-UniRule"/>
</dbReference>
<dbReference type="GO" id="GO:0004654">
    <property type="term" value="F:polyribonucleotide nucleotidyltransferase activity"/>
    <property type="evidence" value="ECO:0007669"/>
    <property type="project" value="UniProtKB-UniRule"/>
</dbReference>
<dbReference type="GO" id="GO:0003723">
    <property type="term" value="F:RNA binding"/>
    <property type="evidence" value="ECO:0007669"/>
    <property type="project" value="UniProtKB-UniRule"/>
</dbReference>
<dbReference type="GO" id="GO:0006402">
    <property type="term" value="P:mRNA catabolic process"/>
    <property type="evidence" value="ECO:0007669"/>
    <property type="project" value="UniProtKB-UniRule"/>
</dbReference>
<dbReference type="GO" id="GO:0006396">
    <property type="term" value="P:RNA processing"/>
    <property type="evidence" value="ECO:0007669"/>
    <property type="project" value="InterPro"/>
</dbReference>
<dbReference type="CDD" id="cd02393">
    <property type="entry name" value="KH-I_PNPase"/>
    <property type="match status" value="1"/>
</dbReference>
<dbReference type="CDD" id="cd11364">
    <property type="entry name" value="RNase_PH_PNPase_2"/>
    <property type="match status" value="1"/>
</dbReference>
<dbReference type="FunFam" id="2.40.50.140:FF:000069">
    <property type="entry name" value="Polyribonucleotide nucleotidyltransferase"/>
    <property type="match status" value="1"/>
</dbReference>
<dbReference type="FunFam" id="3.30.1370.10:FF:000001">
    <property type="entry name" value="Polyribonucleotide nucleotidyltransferase"/>
    <property type="match status" value="1"/>
</dbReference>
<dbReference type="FunFam" id="3.30.230.70:FF:000001">
    <property type="entry name" value="Polyribonucleotide nucleotidyltransferase"/>
    <property type="match status" value="1"/>
</dbReference>
<dbReference type="FunFam" id="3.30.230.70:FF:000002">
    <property type="entry name" value="Polyribonucleotide nucleotidyltransferase"/>
    <property type="match status" value="1"/>
</dbReference>
<dbReference type="Gene3D" id="3.30.230.70">
    <property type="entry name" value="GHMP Kinase, N-terminal domain"/>
    <property type="match status" value="2"/>
</dbReference>
<dbReference type="Gene3D" id="3.30.1370.10">
    <property type="entry name" value="K Homology domain, type 1"/>
    <property type="match status" value="1"/>
</dbReference>
<dbReference type="Gene3D" id="2.40.50.140">
    <property type="entry name" value="Nucleic acid-binding proteins"/>
    <property type="match status" value="1"/>
</dbReference>
<dbReference type="HAMAP" id="MF_01595">
    <property type="entry name" value="PNPase"/>
    <property type="match status" value="1"/>
</dbReference>
<dbReference type="InterPro" id="IPR001247">
    <property type="entry name" value="ExoRNase_PH_dom1"/>
</dbReference>
<dbReference type="InterPro" id="IPR036345">
    <property type="entry name" value="ExoRNase_PH_dom2_sf"/>
</dbReference>
<dbReference type="InterPro" id="IPR014069">
    <property type="entry name" value="GPSI/PNP"/>
</dbReference>
<dbReference type="InterPro" id="IPR004087">
    <property type="entry name" value="KH_dom"/>
</dbReference>
<dbReference type="InterPro" id="IPR004088">
    <property type="entry name" value="KH_dom_type_1"/>
</dbReference>
<dbReference type="InterPro" id="IPR036612">
    <property type="entry name" value="KH_dom_type_1_sf"/>
</dbReference>
<dbReference type="InterPro" id="IPR012340">
    <property type="entry name" value="NA-bd_OB-fold"/>
</dbReference>
<dbReference type="InterPro" id="IPR012162">
    <property type="entry name" value="PNPase"/>
</dbReference>
<dbReference type="InterPro" id="IPR027408">
    <property type="entry name" value="PNPase/RNase_PH_dom_sf"/>
</dbReference>
<dbReference type="InterPro" id="IPR015848">
    <property type="entry name" value="PNPase_PH_RNA-bd_bac/org-type"/>
</dbReference>
<dbReference type="InterPro" id="IPR036456">
    <property type="entry name" value="PNPase_PH_RNA-bd_sf"/>
</dbReference>
<dbReference type="InterPro" id="IPR020568">
    <property type="entry name" value="Ribosomal_Su5_D2-typ_SF"/>
</dbReference>
<dbReference type="InterPro" id="IPR003029">
    <property type="entry name" value="S1_domain"/>
</dbReference>
<dbReference type="NCBIfam" id="TIGR03591">
    <property type="entry name" value="polynuc_phos"/>
    <property type="match status" value="1"/>
</dbReference>
<dbReference type="NCBIfam" id="TIGR02696">
    <property type="entry name" value="pppGpp_PNP"/>
    <property type="match status" value="1"/>
</dbReference>
<dbReference type="NCBIfam" id="NF008805">
    <property type="entry name" value="PRK11824.1"/>
    <property type="match status" value="1"/>
</dbReference>
<dbReference type="PANTHER" id="PTHR11252">
    <property type="entry name" value="POLYRIBONUCLEOTIDE NUCLEOTIDYLTRANSFERASE"/>
    <property type="match status" value="1"/>
</dbReference>
<dbReference type="PANTHER" id="PTHR11252:SF0">
    <property type="entry name" value="POLYRIBONUCLEOTIDE NUCLEOTIDYLTRANSFERASE 1, MITOCHONDRIAL"/>
    <property type="match status" value="1"/>
</dbReference>
<dbReference type="Pfam" id="PF00013">
    <property type="entry name" value="KH_1"/>
    <property type="match status" value="1"/>
</dbReference>
<dbReference type="Pfam" id="PF03726">
    <property type="entry name" value="PNPase"/>
    <property type="match status" value="1"/>
</dbReference>
<dbReference type="Pfam" id="PF01138">
    <property type="entry name" value="RNase_PH"/>
    <property type="match status" value="2"/>
</dbReference>
<dbReference type="Pfam" id="PF00575">
    <property type="entry name" value="S1"/>
    <property type="match status" value="1"/>
</dbReference>
<dbReference type="PIRSF" id="PIRSF005499">
    <property type="entry name" value="PNPase"/>
    <property type="match status" value="1"/>
</dbReference>
<dbReference type="SMART" id="SM00322">
    <property type="entry name" value="KH"/>
    <property type="match status" value="1"/>
</dbReference>
<dbReference type="SMART" id="SM00316">
    <property type="entry name" value="S1"/>
    <property type="match status" value="1"/>
</dbReference>
<dbReference type="SUPFAM" id="SSF54791">
    <property type="entry name" value="Eukaryotic type KH-domain (KH-domain type I)"/>
    <property type="match status" value="1"/>
</dbReference>
<dbReference type="SUPFAM" id="SSF50249">
    <property type="entry name" value="Nucleic acid-binding proteins"/>
    <property type="match status" value="1"/>
</dbReference>
<dbReference type="SUPFAM" id="SSF46915">
    <property type="entry name" value="Polynucleotide phosphorylase/guanosine pentaphosphate synthase (PNPase/GPSI), domain 3"/>
    <property type="match status" value="1"/>
</dbReference>
<dbReference type="SUPFAM" id="SSF55666">
    <property type="entry name" value="Ribonuclease PH domain 2-like"/>
    <property type="match status" value="2"/>
</dbReference>
<dbReference type="SUPFAM" id="SSF54211">
    <property type="entry name" value="Ribosomal protein S5 domain 2-like"/>
    <property type="match status" value="2"/>
</dbReference>
<dbReference type="PROSITE" id="PS50084">
    <property type="entry name" value="KH_TYPE_1"/>
    <property type="match status" value="1"/>
</dbReference>
<dbReference type="PROSITE" id="PS50126">
    <property type="entry name" value="S1"/>
    <property type="match status" value="1"/>
</dbReference>
<reference key="1">
    <citation type="journal article" date="2008" name="J. Bacteriol.">
        <title>Genome sequence of the fish pathogen Renibacterium salmoninarum suggests reductive evolution away from an environmental Arthrobacter ancestor.</title>
        <authorList>
            <person name="Wiens G.D."/>
            <person name="Rockey D.D."/>
            <person name="Wu Z."/>
            <person name="Chang J."/>
            <person name="Levy R."/>
            <person name="Crane S."/>
            <person name="Chen D.S."/>
            <person name="Capri G.R."/>
            <person name="Burnett J.R."/>
            <person name="Sudheesh P.S."/>
            <person name="Schipma M.J."/>
            <person name="Burd H."/>
            <person name="Bhattacharyya A."/>
            <person name="Rhodes L.D."/>
            <person name="Kaul R."/>
            <person name="Strom M.S."/>
        </authorList>
    </citation>
    <scope>NUCLEOTIDE SEQUENCE [LARGE SCALE GENOMIC DNA]</scope>
    <source>
        <strain>ATCC 33209 / DSM 20767 / JCM 11484 / NBRC 15589 / NCIMB 2235</strain>
    </source>
</reference>
<proteinExistence type="inferred from homology"/>
<name>PNP_RENSM</name>
<accession>A9WPX4</accession>
<feature type="chain" id="PRO_0000329798" description="Polyribonucleotide nucleotidyltransferase">
    <location>
        <begin position="1"/>
        <end position="746"/>
    </location>
</feature>
<feature type="domain" description="KH" evidence="1">
    <location>
        <begin position="581"/>
        <end position="640"/>
    </location>
</feature>
<feature type="domain" description="S1 motif" evidence="1">
    <location>
        <begin position="652"/>
        <end position="724"/>
    </location>
</feature>
<feature type="binding site" evidence="1">
    <location>
        <position position="515"/>
    </location>
    <ligand>
        <name>Mg(2+)</name>
        <dbReference type="ChEBI" id="CHEBI:18420"/>
    </ligand>
</feature>
<feature type="binding site" evidence="1">
    <location>
        <position position="521"/>
    </location>
    <ligand>
        <name>Mg(2+)</name>
        <dbReference type="ChEBI" id="CHEBI:18420"/>
    </ligand>
</feature>
<sequence>MEGPEIQFSEAVIDNGRFGKRTIRFETGRLAQQAAGAAMVYIDDDTALLSATTAGKQPREGFDFFPLTVDVEERMYAAGRIPGSFFRREGRPSTEAILACRLMDRPLRPAFVKGLRNEVQIVVTVLAINPDELYDVVAINASSMSTQLSGLPFSGPIGGVRVALIEDQWVAFPRHSEMEKAVFNMVVAGRVAGDDVAIMMVEAEATDNSWNLIKENGATAPTEEIVSEGLEAAKPFIKALCEAQADLAARAAKPTVEFPIFLDYQDDIFEAVNAAAAAKLTEVFQIADKQERDNASDALKDEVVSSLSSKFDGREKEISAAFRSVTKQVVRQRILKDQIRIDGRGLTDIRQLTAEVEVLPRVHGSAIFERGETQIMGVTTLNMLKMEQQIDSLSPVTRKRYMHNYNFPPYSTGETGRVGSPKRREIGHGALAERALVPVLPSREEFPYAIRQVSEALSSNGSTSMGSVCASTLSLLNAGVPLKAPVAGIAMGLVSDQVDGQTRYAALTDILGAEDAFGDMDFKVAGTSEFVTAIQLDTKLDGIPASVLAAALKQAREARLHILGVLNAAIDVPDELSEFAPRVIAVKIPVDKIGEVIGPKGKMINQIQEDTGADISIEDDGTVYIGATNGPSADAARSAINAIANPQIPEIGERYLGTVVKTTTFGAFVSLTPGKDGLLHVTELRKINDGKRVDNVDDVVSVGQKIQVEITKIDDRGKLSLSPVVAEDAAAADSAEAAEPAEAAAN</sequence>
<organism>
    <name type="scientific">Renibacterium salmoninarum (strain ATCC 33209 / DSM 20767 / JCM 11484 / NBRC 15589 / NCIMB 2235)</name>
    <dbReference type="NCBI Taxonomy" id="288705"/>
    <lineage>
        <taxon>Bacteria</taxon>
        <taxon>Bacillati</taxon>
        <taxon>Actinomycetota</taxon>
        <taxon>Actinomycetes</taxon>
        <taxon>Micrococcales</taxon>
        <taxon>Micrococcaceae</taxon>
        <taxon>Renibacterium</taxon>
    </lineage>
</organism>
<protein>
    <recommendedName>
        <fullName evidence="1">Polyribonucleotide nucleotidyltransferase</fullName>
        <ecNumber evidence="1">2.7.7.8</ecNumber>
    </recommendedName>
    <alternativeName>
        <fullName evidence="1">Polynucleotide phosphorylase</fullName>
        <shortName evidence="1">PNPase</shortName>
    </alternativeName>
</protein>
<keyword id="KW-0963">Cytoplasm</keyword>
<keyword id="KW-0460">Magnesium</keyword>
<keyword id="KW-0479">Metal-binding</keyword>
<keyword id="KW-0548">Nucleotidyltransferase</keyword>
<keyword id="KW-1185">Reference proteome</keyword>
<keyword id="KW-0694">RNA-binding</keyword>
<keyword id="KW-0808">Transferase</keyword>
<gene>
    <name evidence="1" type="primary">pnp</name>
    <name type="ordered locus">RSal33209_0672</name>
</gene>
<comment type="function">
    <text evidence="1">Involved in mRNA degradation. Catalyzes the phosphorolysis of single-stranded polyribonucleotides processively in the 3'- to 5'-direction.</text>
</comment>
<comment type="catalytic activity">
    <reaction evidence="1">
        <text>RNA(n+1) + phosphate = RNA(n) + a ribonucleoside 5'-diphosphate</text>
        <dbReference type="Rhea" id="RHEA:22096"/>
        <dbReference type="Rhea" id="RHEA-COMP:14527"/>
        <dbReference type="Rhea" id="RHEA-COMP:17342"/>
        <dbReference type="ChEBI" id="CHEBI:43474"/>
        <dbReference type="ChEBI" id="CHEBI:57930"/>
        <dbReference type="ChEBI" id="CHEBI:140395"/>
        <dbReference type="EC" id="2.7.7.8"/>
    </reaction>
</comment>
<comment type="cofactor">
    <cofactor evidence="1">
        <name>Mg(2+)</name>
        <dbReference type="ChEBI" id="CHEBI:18420"/>
    </cofactor>
</comment>
<comment type="subcellular location">
    <subcellularLocation>
        <location evidence="1">Cytoplasm</location>
    </subcellularLocation>
</comment>
<comment type="similarity">
    <text evidence="1">Belongs to the polyribonucleotide nucleotidyltransferase family.</text>
</comment>
<comment type="sequence caution" evidence="2">
    <conflict type="erroneous initiation">
        <sequence resource="EMBL-CDS" id="ABY22419"/>
    </conflict>
</comment>